<gene>
    <name evidence="1" type="primary">lipB</name>
    <name type="ordered locus">CPS_1710</name>
</gene>
<sequence>MHSNSTIEKSVNSLADSLVIRQLNTMDYSQVWHAMKDFTDNRDDTTADELWLVEHPAVFTQGQAGKAEHLLVPGDIEVVKVDRGGQVTYHGPGQLVVYVMINLRRKKIGVRQLVTLIENSIVSALTDYDIAAYAKADAPGVYVDEKKIASLGLRVRKGCSFHGLAMNVNMDLSPFLRINPCGYAGLEMVQTADLQGPKDTASASTALVKHLINLLKANNVSHQVGLPNENNKYHE</sequence>
<feature type="chain" id="PRO_0000242714" description="Octanoyltransferase">
    <location>
        <begin position="1"/>
        <end position="235"/>
    </location>
</feature>
<feature type="domain" description="BPL/LPL catalytic" evidence="2">
    <location>
        <begin position="44"/>
        <end position="231"/>
    </location>
</feature>
<feature type="active site" description="Acyl-thioester intermediate" evidence="1">
    <location>
        <position position="181"/>
    </location>
</feature>
<feature type="binding site" evidence="1">
    <location>
        <begin position="83"/>
        <end position="90"/>
    </location>
    <ligand>
        <name>substrate</name>
    </ligand>
</feature>
<feature type="binding site" evidence="1">
    <location>
        <begin position="150"/>
        <end position="152"/>
    </location>
    <ligand>
        <name>substrate</name>
    </ligand>
</feature>
<feature type="binding site" evidence="1">
    <location>
        <begin position="163"/>
        <end position="165"/>
    </location>
    <ligand>
        <name>substrate</name>
    </ligand>
</feature>
<feature type="site" description="Lowers pKa of active site Cys" evidence="1">
    <location>
        <position position="147"/>
    </location>
</feature>
<name>LIPB_COLP3</name>
<keyword id="KW-0012">Acyltransferase</keyword>
<keyword id="KW-0963">Cytoplasm</keyword>
<keyword id="KW-0808">Transferase</keyword>
<comment type="function">
    <text evidence="1">Catalyzes the transfer of endogenously produced octanoic acid from octanoyl-acyl-carrier-protein onto the lipoyl domains of lipoate-dependent enzymes. Lipoyl-ACP can also act as a substrate although octanoyl-ACP is likely to be the physiological substrate.</text>
</comment>
<comment type="catalytic activity">
    <reaction evidence="1">
        <text>octanoyl-[ACP] + L-lysyl-[protein] = N(6)-octanoyl-L-lysyl-[protein] + holo-[ACP] + H(+)</text>
        <dbReference type="Rhea" id="RHEA:17665"/>
        <dbReference type="Rhea" id="RHEA-COMP:9636"/>
        <dbReference type="Rhea" id="RHEA-COMP:9685"/>
        <dbReference type="Rhea" id="RHEA-COMP:9752"/>
        <dbReference type="Rhea" id="RHEA-COMP:9928"/>
        <dbReference type="ChEBI" id="CHEBI:15378"/>
        <dbReference type="ChEBI" id="CHEBI:29969"/>
        <dbReference type="ChEBI" id="CHEBI:64479"/>
        <dbReference type="ChEBI" id="CHEBI:78463"/>
        <dbReference type="ChEBI" id="CHEBI:78809"/>
        <dbReference type="EC" id="2.3.1.181"/>
    </reaction>
</comment>
<comment type="pathway">
    <text evidence="1">Protein modification; protein lipoylation via endogenous pathway; protein N(6)-(lipoyl)lysine from octanoyl-[acyl-carrier-protein]: step 1/2.</text>
</comment>
<comment type="subcellular location">
    <subcellularLocation>
        <location evidence="1">Cytoplasm</location>
    </subcellularLocation>
</comment>
<comment type="miscellaneous">
    <text evidence="1">In the reaction, the free carboxyl group of octanoic acid is attached via an amide linkage to the epsilon-amino group of a specific lysine residue of lipoyl domains of lipoate-dependent enzymes.</text>
</comment>
<comment type="similarity">
    <text evidence="1">Belongs to the LipB family.</text>
</comment>
<dbReference type="EC" id="2.3.1.181" evidence="1"/>
<dbReference type="EMBL" id="CP000083">
    <property type="protein sequence ID" value="AAZ27941.1"/>
    <property type="molecule type" value="Genomic_DNA"/>
</dbReference>
<dbReference type="RefSeq" id="WP_011042542.1">
    <property type="nucleotide sequence ID" value="NC_003910.7"/>
</dbReference>
<dbReference type="SMR" id="Q484R7"/>
<dbReference type="STRING" id="167879.CPS_1710"/>
<dbReference type="KEGG" id="cps:CPS_1710"/>
<dbReference type="eggNOG" id="COG0321">
    <property type="taxonomic scope" value="Bacteria"/>
</dbReference>
<dbReference type="HOGENOM" id="CLU_035168_3_1_6"/>
<dbReference type="UniPathway" id="UPA00538">
    <property type="reaction ID" value="UER00592"/>
</dbReference>
<dbReference type="Proteomes" id="UP000000547">
    <property type="component" value="Chromosome"/>
</dbReference>
<dbReference type="GO" id="GO:0005737">
    <property type="term" value="C:cytoplasm"/>
    <property type="evidence" value="ECO:0007669"/>
    <property type="project" value="UniProtKB-SubCell"/>
</dbReference>
<dbReference type="GO" id="GO:0033819">
    <property type="term" value="F:lipoyl(octanoyl) transferase activity"/>
    <property type="evidence" value="ECO:0007669"/>
    <property type="project" value="UniProtKB-EC"/>
</dbReference>
<dbReference type="GO" id="GO:0036211">
    <property type="term" value="P:protein modification process"/>
    <property type="evidence" value="ECO:0007669"/>
    <property type="project" value="InterPro"/>
</dbReference>
<dbReference type="CDD" id="cd16444">
    <property type="entry name" value="LipB"/>
    <property type="match status" value="1"/>
</dbReference>
<dbReference type="FunFam" id="3.30.930.10:FF:000020">
    <property type="entry name" value="Octanoyltransferase"/>
    <property type="match status" value="1"/>
</dbReference>
<dbReference type="Gene3D" id="3.30.930.10">
    <property type="entry name" value="Bira Bifunctional Protein, Domain 2"/>
    <property type="match status" value="1"/>
</dbReference>
<dbReference type="HAMAP" id="MF_00013">
    <property type="entry name" value="LipB"/>
    <property type="match status" value="1"/>
</dbReference>
<dbReference type="InterPro" id="IPR045864">
    <property type="entry name" value="aa-tRNA-synth_II/BPL/LPL"/>
</dbReference>
<dbReference type="InterPro" id="IPR004143">
    <property type="entry name" value="BPL_LPL_catalytic"/>
</dbReference>
<dbReference type="InterPro" id="IPR000544">
    <property type="entry name" value="Octanoyltransferase"/>
</dbReference>
<dbReference type="InterPro" id="IPR020605">
    <property type="entry name" value="Octanoyltransferase_CS"/>
</dbReference>
<dbReference type="NCBIfam" id="TIGR00214">
    <property type="entry name" value="lipB"/>
    <property type="match status" value="1"/>
</dbReference>
<dbReference type="NCBIfam" id="NF010922">
    <property type="entry name" value="PRK14342.1"/>
    <property type="match status" value="1"/>
</dbReference>
<dbReference type="PANTHER" id="PTHR10993:SF7">
    <property type="entry name" value="LIPOYLTRANSFERASE 2, MITOCHONDRIAL-RELATED"/>
    <property type="match status" value="1"/>
</dbReference>
<dbReference type="PANTHER" id="PTHR10993">
    <property type="entry name" value="OCTANOYLTRANSFERASE"/>
    <property type="match status" value="1"/>
</dbReference>
<dbReference type="Pfam" id="PF21948">
    <property type="entry name" value="LplA-B_cat"/>
    <property type="match status" value="1"/>
</dbReference>
<dbReference type="PIRSF" id="PIRSF016262">
    <property type="entry name" value="LPLase"/>
    <property type="match status" value="1"/>
</dbReference>
<dbReference type="SUPFAM" id="SSF55681">
    <property type="entry name" value="Class II aaRS and biotin synthetases"/>
    <property type="match status" value="1"/>
</dbReference>
<dbReference type="PROSITE" id="PS51733">
    <property type="entry name" value="BPL_LPL_CATALYTIC"/>
    <property type="match status" value="1"/>
</dbReference>
<dbReference type="PROSITE" id="PS01313">
    <property type="entry name" value="LIPB"/>
    <property type="match status" value="1"/>
</dbReference>
<organism>
    <name type="scientific">Colwellia psychrerythraea (strain 34H / ATCC BAA-681)</name>
    <name type="common">Vibrio psychroerythus</name>
    <dbReference type="NCBI Taxonomy" id="167879"/>
    <lineage>
        <taxon>Bacteria</taxon>
        <taxon>Pseudomonadati</taxon>
        <taxon>Pseudomonadota</taxon>
        <taxon>Gammaproteobacteria</taxon>
        <taxon>Alteromonadales</taxon>
        <taxon>Colwelliaceae</taxon>
        <taxon>Colwellia</taxon>
    </lineage>
</organism>
<reference key="1">
    <citation type="journal article" date="2005" name="Proc. Natl. Acad. Sci. U.S.A.">
        <title>The psychrophilic lifestyle as revealed by the genome sequence of Colwellia psychrerythraea 34H through genomic and proteomic analyses.</title>
        <authorList>
            <person name="Methe B.A."/>
            <person name="Nelson K.E."/>
            <person name="Deming J.W."/>
            <person name="Momen B."/>
            <person name="Melamud E."/>
            <person name="Zhang X."/>
            <person name="Moult J."/>
            <person name="Madupu R."/>
            <person name="Nelson W.C."/>
            <person name="Dodson R.J."/>
            <person name="Brinkac L.M."/>
            <person name="Daugherty S.C."/>
            <person name="Durkin A.S."/>
            <person name="DeBoy R.T."/>
            <person name="Kolonay J.F."/>
            <person name="Sullivan S.A."/>
            <person name="Zhou L."/>
            <person name="Davidsen T.M."/>
            <person name="Wu M."/>
            <person name="Huston A.L."/>
            <person name="Lewis M."/>
            <person name="Weaver B."/>
            <person name="Weidman J.F."/>
            <person name="Khouri H."/>
            <person name="Utterback T.R."/>
            <person name="Feldblyum T.V."/>
            <person name="Fraser C.M."/>
        </authorList>
    </citation>
    <scope>NUCLEOTIDE SEQUENCE [LARGE SCALE GENOMIC DNA]</scope>
    <source>
        <strain>34H / ATCC BAA-681</strain>
    </source>
</reference>
<proteinExistence type="inferred from homology"/>
<evidence type="ECO:0000255" key="1">
    <source>
        <dbReference type="HAMAP-Rule" id="MF_00013"/>
    </source>
</evidence>
<evidence type="ECO:0000255" key="2">
    <source>
        <dbReference type="PROSITE-ProRule" id="PRU01067"/>
    </source>
</evidence>
<protein>
    <recommendedName>
        <fullName evidence="1">Octanoyltransferase</fullName>
        <ecNumber evidence="1">2.3.1.181</ecNumber>
    </recommendedName>
    <alternativeName>
        <fullName evidence="1">Lipoate-protein ligase B</fullName>
    </alternativeName>
    <alternativeName>
        <fullName evidence="1">Lipoyl/octanoyl transferase</fullName>
    </alternativeName>
    <alternativeName>
        <fullName evidence="1">Octanoyl-[acyl-carrier-protein]-protein N-octanoyltransferase</fullName>
    </alternativeName>
</protein>
<accession>Q484R7</accession>